<protein>
    <recommendedName>
        <fullName>Alpha-defensin 13</fullName>
    </recommendedName>
    <alternativeName>
        <fullName>Defensin-related cryptdin-13</fullName>
    </alternativeName>
</protein>
<accession>P50711</accession>
<feature type="signal peptide" evidence="2">
    <location>
        <begin position="1"/>
        <end position="19"/>
    </location>
</feature>
<feature type="propeptide" id="PRO_0000006839" evidence="1">
    <location>
        <begin position="20"/>
        <end position="58"/>
    </location>
</feature>
<feature type="peptide" id="PRO_0000006840" description="Alpha-defensin 13">
    <location>
        <begin position="59"/>
        <end position="93"/>
    </location>
</feature>
<feature type="region of interest" description="Disordered" evidence="3">
    <location>
        <begin position="22"/>
        <end position="54"/>
    </location>
</feature>
<feature type="disulfide bond" evidence="1">
    <location>
        <begin position="64"/>
        <end position="92"/>
    </location>
</feature>
<feature type="disulfide bond" evidence="1">
    <location>
        <begin position="66"/>
        <end position="81"/>
    </location>
</feature>
<feature type="disulfide bond" evidence="1">
    <location>
        <begin position="71"/>
        <end position="91"/>
    </location>
</feature>
<dbReference type="EMBL" id="U03064">
    <property type="protein sequence ID" value="AAA57181.1"/>
    <property type="molecule type" value="mRNA"/>
</dbReference>
<dbReference type="PIR" id="I48896">
    <property type="entry name" value="I48896"/>
</dbReference>
<dbReference type="SMR" id="P50711"/>
<dbReference type="FunCoup" id="P50711">
    <property type="interactions" value="42"/>
</dbReference>
<dbReference type="PeptideAtlas" id="P50711"/>
<dbReference type="AGR" id="MGI:99588"/>
<dbReference type="MGI" id="MGI:99588">
    <property type="gene designation" value="Defa13"/>
</dbReference>
<dbReference type="InParanoid" id="P50711"/>
<dbReference type="PRO" id="PR:P50711"/>
<dbReference type="Proteomes" id="UP000000589">
    <property type="component" value="Unplaced"/>
</dbReference>
<dbReference type="RNAct" id="P50711">
    <property type="molecule type" value="protein"/>
</dbReference>
<dbReference type="GO" id="GO:0005615">
    <property type="term" value="C:extracellular space"/>
    <property type="evidence" value="ECO:0007669"/>
    <property type="project" value="InterPro"/>
</dbReference>
<dbReference type="GO" id="GO:0042742">
    <property type="term" value="P:defense response to bacterium"/>
    <property type="evidence" value="ECO:0007669"/>
    <property type="project" value="UniProtKB-KW"/>
</dbReference>
<dbReference type="InterPro" id="IPR016327">
    <property type="entry name" value="Alpha-defensin"/>
</dbReference>
<dbReference type="InterPro" id="IPR006081">
    <property type="entry name" value="Alpha-defensin_C"/>
</dbReference>
<dbReference type="InterPro" id="IPR002366">
    <property type="entry name" value="Alpha-defensin_N"/>
</dbReference>
<dbReference type="InterPro" id="IPR006080">
    <property type="entry name" value="Beta/alpha-defensin_C"/>
</dbReference>
<dbReference type="PANTHER" id="PTHR11876">
    <property type="entry name" value="ALPHA-DEFENSIN 1"/>
    <property type="match status" value="1"/>
</dbReference>
<dbReference type="PANTHER" id="PTHR11876:SF2">
    <property type="entry name" value="ALPHA-DEFENSIN 1-RELATED"/>
    <property type="match status" value="1"/>
</dbReference>
<dbReference type="Pfam" id="PF00323">
    <property type="entry name" value="Defensin_1"/>
    <property type="match status" value="1"/>
</dbReference>
<dbReference type="Pfam" id="PF00879">
    <property type="entry name" value="Defensin_propep"/>
    <property type="match status" value="1"/>
</dbReference>
<dbReference type="PIRSF" id="PIRSF001875">
    <property type="entry name" value="Alpha-defensin"/>
    <property type="match status" value="1"/>
</dbReference>
<dbReference type="SMART" id="SM01418">
    <property type="entry name" value="Defensin_propep"/>
    <property type="match status" value="1"/>
</dbReference>
<dbReference type="SMART" id="SM00048">
    <property type="entry name" value="DEFSN"/>
    <property type="match status" value="1"/>
</dbReference>
<dbReference type="SUPFAM" id="SSF57392">
    <property type="entry name" value="Defensin-like"/>
    <property type="match status" value="1"/>
</dbReference>
<dbReference type="PROSITE" id="PS00269">
    <property type="entry name" value="DEFENSIN"/>
    <property type="match status" value="1"/>
</dbReference>
<name>DFA13_MOUSE</name>
<keyword id="KW-0044">Antibiotic</keyword>
<keyword id="KW-0929">Antimicrobial</keyword>
<keyword id="KW-0211">Defensin</keyword>
<keyword id="KW-1015">Disulfide bond</keyword>
<keyword id="KW-1185">Reference proteome</keyword>
<keyword id="KW-0964">Secreted</keyword>
<keyword id="KW-0732">Signal</keyword>
<organism>
    <name type="scientific">Mus musculus</name>
    <name type="common">Mouse</name>
    <dbReference type="NCBI Taxonomy" id="10090"/>
    <lineage>
        <taxon>Eukaryota</taxon>
        <taxon>Metazoa</taxon>
        <taxon>Chordata</taxon>
        <taxon>Craniata</taxon>
        <taxon>Vertebrata</taxon>
        <taxon>Euteleostomi</taxon>
        <taxon>Mammalia</taxon>
        <taxon>Eutheria</taxon>
        <taxon>Euarchontoglires</taxon>
        <taxon>Glires</taxon>
        <taxon>Rodentia</taxon>
        <taxon>Myomorpha</taxon>
        <taxon>Muroidea</taxon>
        <taxon>Muridae</taxon>
        <taxon>Murinae</taxon>
        <taxon>Mus</taxon>
        <taxon>Mus</taxon>
    </lineage>
</organism>
<reference key="1">
    <citation type="journal article" date="1994" name="Infect. Immun.">
        <title>Mouse Paneth cell defensins: primary structures and antibacterial activities of numerous cryptdin isoforms.</title>
        <authorList>
            <person name="Ouellette A.J."/>
            <person name="Hsieh M.M."/>
            <person name="Nosek M.T."/>
            <person name="Cano-Gauci D.F."/>
            <person name="Huttner K.M."/>
            <person name="Buick R.N."/>
            <person name="Selsted M.E."/>
        </authorList>
    </citation>
    <scope>NUCLEOTIDE SEQUENCE [MRNA]</scope>
    <source>
        <strain>CD-1</strain>
        <tissue>Intestinal crypt</tissue>
    </source>
</reference>
<reference key="2">
    <citation type="journal article" date="1994" name="Genomics">
        <title>Structure and diversity of the murine cryptdin gene family.</title>
        <authorList>
            <person name="Huttner K.M."/>
            <person name="Selsted M.E."/>
            <person name="Ouellette A.J."/>
        </authorList>
    </citation>
    <scope>NUCLEOTIDE SEQUENCE [MRNA] OF 59-93</scope>
    <source>
        <strain>129/SvJ</strain>
        <strain>C3H/HeJ</strain>
        <tissue>Small intestine</tissue>
    </source>
</reference>
<gene>
    <name type="primary">Defa13</name>
    <name type="synonym">Defcr13</name>
</gene>
<comment type="function">
    <text>Probably contributes to the antimicrobial barrier function of the small bowel mucosa.</text>
</comment>
<comment type="subcellular location">
    <subcellularLocation>
        <location>Secreted</location>
    </subcellularLocation>
</comment>
<comment type="tissue specificity">
    <text>Paneth cells of the small bowel.</text>
</comment>
<comment type="similarity">
    <text evidence="4">Belongs to the alpha-defensin family.</text>
</comment>
<evidence type="ECO:0000250" key="1"/>
<evidence type="ECO:0000255" key="2"/>
<evidence type="ECO:0000256" key="3">
    <source>
        <dbReference type="SAM" id="MobiDB-lite"/>
    </source>
</evidence>
<evidence type="ECO:0000305" key="4"/>
<sequence>MKTLVLLSALVLLAFQVQADPIQNTDEETKTEEQPGEEDQAVSVSFGDPEGTSLQEESLRDLVCYCRKRGCKRREHMNGTCRRGHLMYTLCCR</sequence>
<proteinExistence type="evidence at transcript level"/>